<feature type="chain" id="PRO_0000269812" description="Pyridoxal kinase PdxY">
    <location>
        <begin position="1"/>
        <end position="286"/>
    </location>
</feature>
<feature type="binding site" evidence="1">
    <location>
        <position position="9"/>
    </location>
    <ligand>
        <name>substrate</name>
    </ligand>
</feature>
<feature type="binding site" evidence="1">
    <location>
        <begin position="44"/>
        <end position="45"/>
    </location>
    <ligand>
        <name>substrate</name>
    </ligand>
</feature>
<feature type="binding site" evidence="1">
    <location>
        <position position="111"/>
    </location>
    <ligand>
        <name>ATP</name>
        <dbReference type="ChEBI" id="CHEBI:30616"/>
    </ligand>
</feature>
<feature type="binding site" evidence="1">
    <location>
        <position position="148"/>
    </location>
    <ligand>
        <name>ATP</name>
        <dbReference type="ChEBI" id="CHEBI:30616"/>
    </ligand>
</feature>
<feature type="binding site" evidence="1">
    <location>
        <position position="181"/>
    </location>
    <ligand>
        <name>ATP</name>
        <dbReference type="ChEBI" id="CHEBI:30616"/>
    </ligand>
</feature>
<feature type="binding site" evidence="1">
    <location>
        <position position="222"/>
    </location>
    <ligand>
        <name>substrate</name>
    </ligand>
</feature>
<gene>
    <name evidence="1" type="primary">pdxY</name>
    <name type="ordered locus">HS_0933</name>
</gene>
<reference key="1">
    <citation type="journal article" date="2007" name="J. Bacteriol.">
        <title>Complete genome sequence of Haemophilus somnus (Histophilus somni) strain 129Pt and comparison to Haemophilus ducreyi 35000HP and Haemophilus influenzae Rd.</title>
        <authorList>
            <person name="Challacombe J.F."/>
            <person name="Duncan A.J."/>
            <person name="Brettin T.S."/>
            <person name="Bruce D."/>
            <person name="Chertkov O."/>
            <person name="Detter J.C."/>
            <person name="Han C.S."/>
            <person name="Misra M."/>
            <person name="Richardson P."/>
            <person name="Tapia R."/>
            <person name="Thayer N."/>
            <person name="Xie G."/>
            <person name="Inzana T.J."/>
        </authorList>
    </citation>
    <scope>NUCLEOTIDE SEQUENCE [LARGE SCALE GENOMIC DNA]</scope>
    <source>
        <strain>129Pt</strain>
    </source>
</reference>
<dbReference type="EC" id="2.7.1.35" evidence="1"/>
<dbReference type="EMBL" id="CP000436">
    <property type="protein sequence ID" value="ABI25208.1"/>
    <property type="molecule type" value="Genomic_DNA"/>
</dbReference>
<dbReference type="SMR" id="Q0I3D2"/>
<dbReference type="KEGG" id="hso:HS_0933"/>
<dbReference type="eggNOG" id="COG2240">
    <property type="taxonomic scope" value="Bacteria"/>
</dbReference>
<dbReference type="HOGENOM" id="CLU_046496_3_0_6"/>
<dbReference type="UniPathway" id="UPA01068">
    <property type="reaction ID" value="UER00298"/>
</dbReference>
<dbReference type="GO" id="GO:0005829">
    <property type="term" value="C:cytosol"/>
    <property type="evidence" value="ECO:0007669"/>
    <property type="project" value="TreeGrafter"/>
</dbReference>
<dbReference type="GO" id="GO:0005524">
    <property type="term" value="F:ATP binding"/>
    <property type="evidence" value="ECO:0007669"/>
    <property type="project" value="UniProtKB-UniRule"/>
</dbReference>
<dbReference type="GO" id="GO:0000287">
    <property type="term" value="F:magnesium ion binding"/>
    <property type="evidence" value="ECO:0007669"/>
    <property type="project" value="UniProtKB-UniRule"/>
</dbReference>
<dbReference type="GO" id="GO:0008478">
    <property type="term" value="F:pyridoxal kinase activity"/>
    <property type="evidence" value="ECO:0007669"/>
    <property type="project" value="UniProtKB-UniRule"/>
</dbReference>
<dbReference type="GO" id="GO:0009443">
    <property type="term" value="P:pyridoxal 5'-phosphate salvage"/>
    <property type="evidence" value="ECO:0007669"/>
    <property type="project" value="UniProtKB-UniRule"/>
</dbReference>
<dbReference type="CDD" id="cd01173">
    <property type="entry name" value="pyridoxal_pyridoxamine_kinase"/>
    <property type="match status" value="1"/>
</dbReference>
<dbReference type="FunFam" id="3.40.1190.20:FF:000008">
    <property type="entry name" value="Pyridoxal kinase PdxY"/>
    <property type="match status" value="1"/>
</dbReference>
<dbReference type="Gene3D" id="3.40.1190.20">
    <property type="match status" value="1"/>
</dbReference>
<dbReference type="HAMAP" id="MF_01639">
    <property type="entry name" value="PdxY"/>
    <property type="match status" value="1"/>
</dbReference>
<dbReference type="InterPro" id="IPR013749">
    <property type="entry name" value="PM/HMP-P_kinase-1"/>
</dbReference>
<dbReference type="InterPro" id="IPR004625">
    <property type="entry name" value="PyrdxlKinase"/>
</dbReference>
<dbReference type="InterPro" id="IPR023685">
    <property type="entry name" value="Pyridoxal_kinase_PdxY"/>
</dbReference>
<dbReference type="InterPro" id="IPR029056">
    <property type="entry name" value="Ribokinase-like"/>
</dbReference>
<dbReference type="NCBIfam" id="NF004398">
    <property type="entry name" value="PRK05756.1"/>
    <property type="match status" value="1"/>
</dbReference>
<dbReference type="NCBIfam" id="TIGR00687">
    <property type="entry name" value="pyridox_kin"/>
    <property type="match status" value="1"/>
</dbReference>
<dbReference type="PANTHER" id="PTHR10534">
    <property type="entry name" value="PYRIDOXAL KINASE"/>
    <property type="match status" value="1"/>
</dbReference>
<dbReference type="PANTHER" id="PTHR10534:SF2">
    <property type="entry name" value="PYRIDOXAL KINASE"/>
    <property type="match status" value="1"/>
</dbReference>
<dbReference type="Pfam" id="PF08543">
    <property type="entry name" value="Phos_pyr_kin"/>
    <property type="match status" value="1"/>
</dbReference>
<dbReference type="SUPFAM" id="SSF53613">
    <property type="entry name" value="Ribokinase-like"/>
    <property type="match status" value="1"/>
</dbReference>
<sequence>MKNILSIQSHVVYGYAGNKSATFPMQLLGIDVWALNTVQFSNHTQYGKWTGMVIPKEQIGEIVQGIDNIGELHQCDAVLSGYIGSAEQVEEIIKAFHKIKERNPKAIYLCDPVMGHPDKGCVVADGVKEGLIKIAMAQADIITPNLVELRELSGLAVENFEQAIEAVKVILSKGPKKVLVKHLSRVGKNAAQFEMLLANNDGIWHISRPLHNFNKEPVGVGDLTAGLFLANLLNGKSDVEAFEHTANTVNDVMETTHNAGVYELQTIAAREWIVNPKSQYKAVKIG</sequence>
<proteinExistence type="inferred from homology"/>
<comment type="function">
    <text evidence="1">Pyridoxal kinase involved in the salvage pathway of pyridoxal 5'-phosphate (PLP). Catalyzes the phosphorylation of pyridoxal to PLP.</text>
</comment>
<comment type="catalytic activity">
    <reaction evidence="1">
        <text>pyridoxal + ATP = pyridoxal 5'-phosphate + ADP + H(+)</text>
        <dbReference type="Rhea" id="RHEA:10224"/>
        <dbReference type="ChEBI" id="CHEBI:15378"/>
        <dbReference type="ChEBI" id="CHEBI:17310"/>
        <dbReference type="ChEBI" id="CHEBI:30616"/>
        <dbReference type="ChEBI" id="CHEBI:456216"/>
        <dbReference type="ChEBI" id="CHEBI:597326"/>
        <dbReference type="EC" id="2.7.1.35"/>
    </reaction>
</comment>
<comment type="cofactor">
    <cofactor evidence="1">
        <name>Mg(2+)</name>
        <dbReference type="ChEBI" id="CHEBI:18420"/>
    </cofactor>
</comment>
<comment type="pathway">
    <text evidence="1">Cofactor metabolism; pyridoxal 5'-phosphate salvage; pyridoxal 5'-phosphate from pyridoxal: step 1/1.</text>
</comment>
<comment type="subunit">
    <text evidence="1">Homodimer.</text>
</comment>
<comment type="similarity">
    <text evidence="1">Belongs to the pyridoxine kinase family. PdxY subfamily.</text>
</comment>
<keyword id="KW-0067">ATP-binding</keyword>
<keyword id="KW-0418">Kinase</keyword>
<keyword id="KW-0460">Magnesium</keyword>
<keyword id="KW-0547">Nucleotide-binding</keyword>
<keyword id="KW-0808">Transferase</keyword>
<protein>
    <recommendedName>
        <fullName evidence="1">Pyridoxal kinase PdxY</fullName>
        <shortName evidence="1">PL kinase</shortName>
        <ecNumber evidence="1">2.7.1.35</ecNumber>
    </recommendedName>
</protein>
<accession>Q0I3D2</accession>
<organism>
    <name type="scientific">Histophilus somni (strain 129Pt)</name>
    <name type="common">Haemophilus somnus</name>
    <dbReference type="NCBI Taxonomy" id="205914"/>
    <lineage>
        <taxon>Bacteria</taxon>
        <taxon>Pseudomonadati</taxon>
        <taxon>Pseudomonadota</taxon>
        <taxon>Gammaproteobacteria</taxon>
        <taxon>Pasteurellales</taxon>
        <taxon>Pasteurellaceae</taxon>
        <taxon>Histophilus</taxon>
    </lineage>
</organism>
<name>PDXY_HISS1</name>
<evidence type="ECO:0000255" key="1">
    <source>
        <dbReference type="HAMAP-Rule" id="MF_01639"/>
    </source>
</evidence>